<name>Y4BD_SINFN</name>
<reference key="1">
    <citation type="journal article" date="1997" name="Nature">
        <title>Molecular basis of symbiosis between Rhizobium and legumes.</title>
        <authorList>
            <person name="Freiberg C.A."/>
            <person name="Fellay R."/>
            <person name="Bairoch A."/>
            <person name="Broughton W.J."/>
            <person name="Rosenthal A."/>
            <person name="Perret X."/>
        </authorList>
    </citation>
    <scope>NUCLEOTIDE SEQUENCE [LARGE SCALE GENOMIC DNA]</scope>
    <source>
        <strain>NBRC 101917 / NGR234</strain>
    </source>
</reference>
<reference key="2">
    <citation type="journal article" date="2009" name="Appl. Environ. Microbiol.">
        <title>Rhizobium sp. strain NGR234 possesses a remarkable number of secretion systems.</title>
        <authorList>
            <person name="Schmeisser C."/>
            <person name="Liesegang H."/>
            <person name="Krysciak D."/>
            <person name="Bakkou N."/>
            <person name="Le Quere A."/>
            <person name="Wollherr A."/>
            <person name="Heinemeyer I."/>
            <person name="Morgenstern B."/>
            <person name="Pommerening-Roeser A."/>
            <person name="Flores M."/>
            <person name="Palacios R."/>
            <person name="Brenner S."/>
            <person name="Gottschalk G."/>
            <person name="Schmitz R.A."/>
            <person name="Broughton W.J."/>
            <person name="Perret X."/>
            <person name="Strittmatter A.W."/>
            <person name="Streit W.R."/>
        </authorList>
    </citation>
    <scope>NUCLEOTIDE SEQUENCE [LARGE SCALE GENOMIC DNA]</scope>
    <source>
        <strain>NBRC 101917 / NGR234</strain>
    </source>
</reference>
<gene>
    <name type="ordered locus">NGR_a00250</name>
    <name type="ORF">y4bD</name>
</gene>
<gene>
    <name type="ordered locus">NGR_a02010</name>
    <name type="ORF">y4pK</name>
</gene>
<sequence length="89" mass="10228">MRIEFEVTHPFHPWRGQRFVLSTRKQNWGEDRVMFYDADGRLRSLLASWTDVAAPDVFIQIAAGRSFVRPDDLATLAALIEQIERSHGG</sequence>
<accession>P55371</accession>
<organism>
    <name type="scientific">Sinorhizobium fredii (strain NBRC 101917 / NGR234)</name>
    <dbReference type="NCBI Taxonomy" id="394"/>
    <lineage>
        <taxon>Bacteria</taxon>
        <taxon>Pseudomonadati</taxon>
        <taxon>Pseudomonadota</taxon>
        <taxon>Alphaproteobacteria</taxon>
        <taxon>Hyphomicrobiales</taxon>
        <taxon>Rhizobiaceae</taxon>
        <taxon>Sinorhizobium/Ensifer group</taxon>
        <taxon>Sinorhizobium</taxon>
    </lineage>
</organism>
<comment type="similarity">
    <text evidence="1">To Rhizobium NGR234A y4oN.</text>
</comment>
<keyword id="KW-0614">Plasmid</keyword>
<keyword id="KW-1185">Reference proteome</keyword>
<feature type="chain" id="PRO_0000200806" description="Uncharacterized protein y4bD/y4pK">
    <location>
        <begin position="1"/>
        <end position="89"/>
    </location>
</feature>
<evidence type="ECO:0000305" key="1"/>
<geneLocation type="plasmid">
    <name>sym pNGR234a</name>
</geneLocation>
<dbReference type="EMBL" id="U00090">
    <property type="protein sequence ID" value="AAB91620.1"/>
    <property type="molecule type" value="Genomic_DNA"/>
</dbReference>
<dbReference type="EMBL" id="U00090">
    <property type="protein sequence ID" value="AAB91821.1"/>
    <property type="molecule type" value="Genomic_DNA"/>
</dbReference>
<dbReference type="RefSeq" id="NP_443782.1">
    <property type="nucleotide sequence ID" value="NC_000914.2"/>
</dbReference>
<dbReference type="RefSeq" id="NP_444024.1">
    <property type="nucleotide sequence ID" value="NC_000914.2"/>
</dbReference>
<dbReference type="RefSeq" id="WP_010875067.1">
    <property type="nucleotide sequence ID" value="NC_000914.2"/>
</dbReference>
<dbReference type="RefSeq" id="YP_002822311.1">
    <property type="nucleotide sequence ID" value="NC_012586.1"/>
</dbReference>
<dbReference type="RefSeq" id="YP_002822375.1">
    <property type="nucleotide sequence ID" value="NC_012586.1"/>
</dbReference>
<dbReference type="RefSeq" id="YP_002823136.1">
    <property type="nucleotide sequence ID" value="NC_012586.1"/>
</dbReference>
<dbReference type="RefSeq" id="YP_002823203.1">
    <property type="nucleotide sequence ID" value="NC_012586.1"/>
</dbReference>
<dbReference type="RefSeq" id="YP_002823711.1">
    <property type="nucleotide sequence ID" value="NC_012586.1"/>
</dbReference>
<dbReference type="RefSeq" id="YP_002823881.1">
    <property type="nucleotide sequence ID" value="NC_012586.1"/>
</dbReference>
<dbReference type="RefSeq" id="YP_002826117.1">
    <property type="nucleotide sequence ID" value="NC_012587.1"/>
</dbReference>
<dbReference type="STRING" id="394.NGR_c15980"/>
<dbReference type="KEGG" id="rhi:NGR_a00250"/>
<dbReference type="KEGG" id="rhi:NGR_a02010"/>
<dbReference type="eggNOG" id="ENOG503394C">
    <property type="taxonomic scope" value="Bacteria"/>
</dbReference>
<dbReference type="HOGENOM" id="CLU_153247_0_0_5"/>
<dbReference type="OrthoDB" id="8376804at2"/>
<dbReference type="Proteomes" id="UP000001054">
    <property type="component" value="Plasmid pNGR234a"/>
</dbReference>
<dbReference type="InterPro" id="IPR035315">
    <property type="entry name" value="DUF5372"/>
</dbReference>
<dbReference type="Pfam" id="PF17342">
    <property type="entry name" value="DUF5372"/>
    <property type="match status" value="1"/>
</dbReference>
<protein>
    <recommendedName>
        <fullName>Uncharacterized protein y4bD/y4pK</fullName>
    </recommendedName>
</protein>
<proteinExistence type="predicted"/>